<accession>A0A2V5HGL3</accession>
<proteinExistence type="inferred from homology"/>
<evidence type="ECO:0000255" key="1"/>
<evidence type="ECO:0000256" key="2">
    <source>
        <dbReference type="SAM" id="MobiDB-lite"/>
    </source>
</evidence>
<evidence type="ECO:0000269" key="3">
    <source>
    </source>
</evidence>
<evidence type="ECO:0000303" key="4">
    <source>
    </source>
</evidence>
<evidence type="ECO:0000305" key="5"/>
<evidence type="ECO:0000305" key="6">
    <source>
    </source>
</evidence>
<keyword id="KW-0472">Membrane</keyword>
<keyword id="KW-1185">Reference proteome</keyword>
<keyword id="KW-0812">Transmembrane</keyword>
<keyword id="KW-1133">Transmembrane helix</keyword>
<keyword id="KW-0813">Transport</keyword>
<dbReference type="EMBL" id="KZ825194">
    <property type="protein sequence ID" value="PYI15150.1"/>
    <property type="molecule type" value="Genomic_DNA"/>
</dbReference>
<dbReference type="SMR" id="A0A2V5HGL3"/>
<dbReference type="OMA" id="WDDWRIR"/>
<dbReference type="Proteomes" id="UP000249829">
    <property type="component" value="Unassembled WGS sequence"/>
</dbReference>
<dbReference type="GO" id="GO:0005886">
    <property type="term" value="C:plasma membrane"/>
    <property type="evidence" value="ECO:0007669"/>
    <property type="project" value="TreeGrafter"/>
</dbReference>
<dbReference type="GO" id="GO:0022857">
    <property type="term" value="F:transmembrane transporter activity"/>
    <property type="evidence" value="ECO:0007669"/>
    <property type="project" value="InterPro"/>
</dbReference>
<dbReference type="CDD" id="cd17502">
    <property type="entry name" value="MFS_Azr1_MDR_like"/>
    <property type="match status" value="1"/>
</dbReference>
<dbReference type="Gene3D" id="1.20.1250.20">
    <property type="entry name" value="MFS general substrate transporter like domains"/>
    <property type="match status" value="1"/>
</dbReference>
<dbReference type="Gene3D" id="1.20.1720.10">
    <property type="entry name" value="Multidrug resistance protein D"/>
    <property type="match status" value="1"/>
</dbReference>
<dbReference type="InterPro" id="IPR011701">
    <property type="entry name" value="MFS"/>
</dbReference>
<dbReference type="InterPro" id="IPR020846">
    <property type="entry name" value="MFS_dom"/>
</dbReference>
<dbReference type="InterPro" id="IPR036259">
    <property type="entry name" value="MFS_trans_sf"/>
</dbReference>
<dbReference type="PANTHER" id="PTHR23501:SF198">
    <property type="entry name" value="AZOLE RESISTANCE PROTEIN 1-RELATED"/>
    <property type="match status" value="1"/>
</dbReference>
<dbReference type="PANTHER" id="PTHR23501">
    <property type="entry name" value="MAJOR FACILITATOR SUPERFAMILY"/>
    <property type="match status" value="1"/>
</dbReference>
<dbReference type="Pfam" id="PF07690">
    <property type="entry name" value="MFS_1"/>
    <property type="match status" value="1"/>
</dbReference>
<dbReference type="PRINTS" id="PR01036">
    <property type="entry name" value="TCRTETB"/>
</dbReference>
<dbReference type="SUPFAM" id="SSF103473">
    <property type="entry name" value="MFS general substrate transporter"/>
    <property type="match status" value="1"/>
</dbReference>
<dbReference type="PROSITE" id="PS50850">
    <property type="entry name" value="MFS"/>
    <property type="match status" value="1"/>
</dbReference>
<name>UNGB_ASPV1</name>
<sequence>MEDEPTYPSFRQSLLVTISLCLTLFCVSLDETVLATAIPRITDQFQSLNDVGWYGSSYLFVFTATQMAWGKLYTMYPAKWVFLTGVTVFEVGSLVCGVSPTSGALIAGRSIAGLGAGSINAGAVLIISNTIPVQKRPIYLGCLGVVHGVVSVLGPVIGGLLTDHASWRWCFFLNLPIGAITVLGIVFCLSTNQPSAGHLSGKEKLRSMDLLGSAFFIPGILMLLLALEWGGSQYAWDSWRVILLFVLSAVALAVFAVVQVRAPEKATIAPRLVTNRNMLGLIGYIVGNSGGLFVFVYYLPIWLQAIKEFSASKSGLAILPTQLGMVAASLAGGILVTVVRYYTPFLIVSSLLAVAGAGLLSSLHPASGLGSILGYQVVLSVGIGLGAQNAMVVPSVVCAPGDVVMAIATLCFLQMLSSSIALTLAQTVFHSRLVTNLAHRAPSVDSALVEQGATRLRDRVPADLLPSVVGAYSQAVSETFYVGVAMCALSLLGSASMQWKRVPGHKEATEKVEGEGQGQGQQQEQDQGQGWGEVGESHALAHPTADK</sequence>
<gene>
    <name evidence="4" type="primary">ungB</name>
    <name type="ORF">BO99DRAFT_343333</name>
</gene>
<feature type="chain" id="PRO_5016020346" description="MFS-type transporter ungB">
    <location>
        <begin position="1"/>
        <end position="547"/>
    </location>
</feature>
<feature type="transmembrane region" description="Helical" evidence="1">
    <location>
        <begin position="14"/>
        <end position="34"/>
    </location>
</feature>
<feature type="transmembrane region" description="Helical" evidence="1">
    <location>
        <begin position="50"/>
        <end position="70"/>
    </location>
</feature>
<feature type="transmembrane region" description="Helical" evidence="1">
    <location>
        <begin position="80"/>
        <end position="100"/>
    </location>
</feature>
<feature type="transmembrane region" description="Helical" evidence="1">
    <location>
        <begin position="111"/>
        <end position="131"/>
    </location>
</feature>
<feature type="transmembrane region" description="Helical" evidence="1">
    <location>
        <begin position="138"/>
        <end position="158"/>
    </location>
</feature>
<feature type="transmembrane region" description="Helical" evidence="1">
    <location>
        <begin position="169"/>
        <end position="189"/>
    </location>
</feature>
<feature type="transmembrane region" description="Helical" evidence="1">
    <location>
        <begin position="210"/>
        <end position="230"/>
    </location>
</feature>
<feature type="transmembrane region" description="Helical" evidence="1">
    <location>
        <begin position="238"/>
        <end position="258"/>
    </location>
</feature>
<feature type="transmembrane region" description="Helical" evidence="1">
    <location>
        <begin position="279"/>
        <end position="299"/>
    </location>
</feature>
<feature type="transmembrane region" description="Helical" evidence="1">
    <location>
        <begin position="316"/>
        <end position="336"/>
    </location>
</feature>
<feature type="transmembrane region" description="Helical" evidence="1">
    <location>
        <begin position="343"/>
        <end position="363"/>
    </location>
</feature>
<feature type="transmembrane region" description="Helical" evidence="1">
    <location>
        <begin position="366"/>
        <end position="386"/>
    </location>
</feature>
<feature type="transmembrane region" description="Helical" evidence="1">
    <location>
        <begin position="392"/>
        <end position="412"/>
    </location>
</feature>
<feature type="transmembrane region" description="Helical" evidence="1">
    <location>
        <begin position="475"/>
        <end position="495"/>
    </location>
</feature>
<feature type="region of interest" description="Disordered" evidence="2">
    <location>
        <begin position="503"/>
        <end position="547"/>
    </location>
</feature>
<feature type="compositionally biased region" description="Basic and acidic residues" evidence="2">
    <location>
        <begin position="504"/>
        <end position="514"/>
    </location>
</feature>
<comment type="function">
    <text evidence="3 6">MFS-type transporter; part of the gene cluster that mediates the biosynthesis of the unguisins, gamma-aminobutyric acid (GABA)-containing fungal cyclic heptapeptides with the amino acid sequence cyclo-(D-Ala1-D-Val2-L-Phe3-D-Val4-D-Ala5-D-Trp6-GABA7) for unguisin A and cyclo-(D-Ala1-D-Val2-L-Leu3-D-Val4-D-Ala5-D-Trp6-GABA7) for unguisin B (PubMed:36715406). May be involved in the secretion of unguisins (Probable).</text>
</comment>
<comment type="subcellular location">
    <subcellularLocation>
        <location evidence="1">Membrane</location>
        <topology evidence="1">Multi-pass membrane protein</topology>
    </subcellularLocation>
</comment>
<comment type="similarity">
    <text evidence="5">Belongs to the major facilitator superfamily. TCR/Tet family.</text>
</comment>
<organism>
    <name type="scientific">Aspergillus violaceofuscus (strain CBS 115571)</name>
    <dbReference type="NCBI Taxonomy" id="1450538"/>
    <lineage>
        <taxon>Eukaryota</taxon>
        <taxon>Fungi</taxon>
        <taxon>Dikarya</taxon>
        <taxon>Ascomycota</taxon>
        <taxon>Pezizomycotina</taxon>
        <taxon>Eurotiomycetes</taxon>
        <taxon>Eurotiomycetidae</taxon>
        <taxon>Eurotiales</taxon>
        <taxon>Aspergillaceae</taxon>
        <taxon>Aspergillus</taxon>
    </lineage>
</organism>
<protein>
    <recommendedName>
        <fullName evidence="4">MFS-type transporter ungB</fullName>
    </recommendedName>
    <alternativeName>
        <fullName evidence="4">Unguisins biosynthesis cluster protein B</fullName>
    </alternativeName>
</protein>
<reference key="1">
    <citation type="submission" date="2018-02" db="EMBL/GenBank/DDBJ databases">
        <title>The genomes of Aspergillus section Nigri reveals drivers in fungal speciation.</title>
        <authorList>
            <consortium name="DOE Joint Genome Institute"/>
            <person name="Vesth T.C."/>
            <person name="Nybo J."/>
            <person name="Theobald S."/>
            <person name="Brandl J."/>
            <person name="Frisvad J.C."/>
            <person name="Nielsen K.F."/>
            <person name="Lyhne E.K."/>
            <person name="Kogle M.E."/>
            <person name="Kuo A."/>
            <person name="Riley R."/>
            <person name="Clum A."/>
            <person name="Nolan M."/>
            <person name="Lipzen A."/>
            <person name="Salamov A."/>
            <person name="Henrissat B."/>
            <person name="Wiebenga A."/>
            <person name="De vries R.P."/>
            <person name="Grigoriev I.V."/>
            <person name="Mortensen U.H."/>
            <person name="Andersen M.R."/>
            <person name="Baker S.E."/>
        </authorList>
    </citation>
    <scope>NUCLEOTIDE SEQUENCE [LARGE SCALE GENOMIC DNA]</scope>
    <source>
        <strain>CBS 115571</strain>
    </source>
</reference>
<reference key="2">
    <citation type="journal article" date="2023" name="J. Nat. Prod.">
        <title>Biosynthetic characterization, heterologous production, and genomics-guided discovery of GABA-containing fungal heptapeptides.</title>
        <authorList>
            <person name="Wei X."/>
            <person name="Chan T.K."/>
            <person name="Kong C.T.D."/>
            <person name="Matsuda Y."/>
        </authorList>
    </citation>
    <scope>FUNCTION</scope>
</reference>